<proteinExistence type="inferred from homology"/>
<keyword id="KW-0028">Amino-acid biosynthesis</keyword>
<keyword id="KW-0963">Cytoplasm</keyword>
<keyword id="KW-0220">Diaminopimelate biosynthesis</keyword>
<keyword id="KW-0456">Lyase</keyword>
<keyword id="KW-0457">Lysine biosynthesis</keyword>
<keyword id="KW-0704">Schiff base</keyword>
<name>DAPA_EHRCJ</name>
<organism>
    <name type="scientific">Ehrlichia canis (strain Jake)</name>
    <dbReference type="NCBI Taxonomy" id="269484"/>
    <lineage>
        <taxon>Bacteria</taxon>
        <taxon>Pseudomonadati</taxon>
        <taxon>Pseudomonadota</taxon>
        <taxon>Alphaproteobacteria</taxon>
        <taxon>Rickettsiales</taxon>
        <taxon>Anaplasmataceae</taxon>
        <taxon>Ehrlichia</taxon>
    </lineage>
</organism>
<accession>Q3YSK1</accession>
<dbReference type="EC" id="4.3.3.7" evidence="1"/>
<dbReference type="EMBL" id="CP000107">
    <property type="protein sequence ID" value="AAZ68304.1"/>
    <property type="molecule type" value="Genomic_DNA"/>
</dbReference>
<dbReference type="RefSeq" id="WP_011304382.1">
    <property type="nucleotide sequence ID" value="NC_007354.1"/>
</dbReference>
<dbReference type="SMR" id="Q3YSK1"/>
<dbReference type="FunCoup" id="Q3YSK1">
    <property type="interactions" value="309"/>
</dbReference>
<dbReference type="STRING" id="269484.Ecaj_0257"/>
<dbReference type="KEGG" id="ecn:Ecaj_0257"/>
<dbReference type="eggNOG" id="COG0329">
    <property type="taxonomic scope" value="Bacteria"/>
</dbReference>
<dbReference type="HOGENOM" id="CLU_049343_7_1_5"/>
<dbReference type="InParanoid" id="Q3YSK1"/>
<dbReference type="UniPathway" id="UPA00034">
    <property type="reaction ID" value="UER00017"/>
</dbReference>
<dbReference type="Proteomes" id="UP000000435">
    <property type="component" value="Chromosome"/>
</dbReference>
<dbReference type="GO" id="GO:0005829">
    <property type="term" value="C:cytosol"/>
    <property type="evidence" value="ECO:0007669"/>
    <property type="project" value="TreeGrafter"/>
</dbReference>
<dbReference type="GO" id="GO:0008840">
    <property type="term" value="F:4-hydroxy-tetrahydrodipicolinate synthase activity"/>
    <property type="evidence" value="ECO:0007669"/>
    <property type="project" value="UniProtKB-UniRule"/>
</dbReference>
<dbReference type="GO" id="GO:0019877">
    <property type="term" value="P:diaminopimelate biosynthetic process"/>
    <property type="evidence" value="ECO:0007669"/>
    <property type="project" value="UniProtKB-UniRule"/>
</dbReference>
<dbReference type="GO" id="GO:0009089">
    <property type="term" value="P:lysine biosynthetic process via diaminopimelate"/>
    <property type="evidence" value="ECO:0007669"/>
    <property type="project" value="UniProtKB-UniRule"/>
</dbReference>
<dbReference type="CDD" id="cd00950">
    <property type="entry name" value="DHDPS"/>
    <property type="match status" value="1"/>
</dbReference>
<dbReference type="Gene3D" id="3.20.20.70">
    <property type="entry name" value="Aldolase class I"/>
    <property type="match status" value="1"/>
</dbReference>
<dbReference type="HAMAP" id="MF_00418">
    <property type="entry name" value="DapA"/>
    <property type="match status" value="1"/>
</dbReference>
<dbReference type="InterPro" id="IPR013785">
    <property type="entry name" value="Aldolase_TIM"/>
</dbReference>
<dbReference type="InterPro" id="IPR005263">
    <property type="entry name" value="DapA"/>
</dbReference>
<dbReference type="InterPro" id="IPR002220">
    <property type="entry name" value="DapA-like"/>
</dbReference>
<dbReference type="NCBIfam" id="TIGR00674">
    <property type="entry name" value="dapA"/>
    <property type="match status" value="1"/>
</dbReference>
<dbReference type="PANTHER" id="PTHR12128:SF66">
    <property type="entry name" value="4-HYDROXY-2-OXOGLUTARATE ALDOLASE, MITOCHONDRIAL"/>
    <property type="match status" value="1"/>
</dbReference>
<dbReference type="PANTHER" id="PTHR12128">
    <property type="entry name" value="DIHYDRODIPICOLINATE SYNTHASE"/>
    <property type="match status" value="1"/>
</dbReference>
<dbReference type="Pfam" id="PF00701">
    <property type="entry name" value="DHDPS"/>
    <property type="match status" value="1"/>
</dbReference>
<dbReference type="PIRSF" id="PIRSF001365">
    <property type="entry name" value="DHDPS"/>
    <property type="match status" value="1"/>
</dbReference>
<dbReference type="PRINTS" id="PR00146">
    <property type="entry name" value="DHPICSNTHASE"/>
</dbReference>
<dbReference type="SMART" id="SM01130">
    <property type="entry name" value="DHDPS"/>
    <property type="match status" value="1"/>
</dbReference>
<dbReference type="SUPFAM" id="SSF51569">
    <property type="entry name" value="Aldolase"/>
    <property type="match status" value="1"/>
</dbReference>
<gene>
    <name evidence="1" type="primary">dapA</name>
    <name type="ordered locus">Ecaj_0257</name>
</gene>
<feature type="chain" id="PRO_1000050187" description="4-hydroxy-tetrahydrodipicolinate synthase">
    <location>
        <begin position="1"/>
        <end position="296"/>
    </location>
</feature>
<feature type="active site" description="Proton donor/acceptor" evidence="1">
    <location>
        <position position="137"/>
    </location>
</feature>
<feature type="active site" description="Schiff-base intermediate with substrate" evidence="1">
    <location>
        <position position="165"/>
    </location>
</feature>
<feature type="binding site" evidence="1">
    <location>
        <position position="49"/>
    </location>
    <ligand>
        <name>pyruvate</name>
        <dbReference type="ChEBI" id="CHEBI:15361"/>
    </ligand>
</feature>
<feature type="binding site" evidence="1">
    <location>
        <position position="208"/>
    </location>
    <ligand>
        <name>pyruvate</name>
        <dbReference type="ChEBI" id="CHEBI:15361"/>
    </ligand>
</feature>
<feature type="site" description="Part of a proton relay during catalysis" evidence="1">
    <location>
        <position position="48"/>
    </location>
</feature>
<feature type="site" description="Part of a proton relay during catalysis" evidence="1">
    <location>
        <position position="111"/>
    </location>
</feature>
<protein>
    <recommendedName>
        <fullName evidence="1">4-hydroxy-tetrahydrodipicolinate synthase</fullName>
        <shortName evidence="1">HTPA synthase</shortName>
        <ecNumber evidence="1">4.3.3.7</ecNumber>
    </recommendedName>
</protein>
<evidence type="ECO:0000255" key="1">
    <source>
        <dbReference type="HAMAP-Rule" id="MF_00418"/>
    </source>
</evidence>
<evidence type="ECO:0000305" key="2"/>
<reference key="1">
    <citation type="journal article" date="2006" name="J. Bacteriol.">
        <title>The genome of the obligately intracellular bacterium Ehrlichia canis reveals themes of complex membrane structure and immune evasion strategies.</title>
        <authorList>
            <person name="Mavromatis K."/>
            <person name="Doyle C.K."/>
            <person name="Lykidis A."/>
            <person name="Ivanova N."/>
            <person name="Francino M.P."/>
            <person name="Chain P."/>
            <person name="Shin M."/>
            <person name="Malfatti S."/>
            <person name="Larimer F."/>
            <person name="Copeland A."/>
            <person name="Detter J.C."/>
            <person name="Land M."/>
            <person name="Richardson P.M."/>
            <person name="Yu X.J."/>
            <person name="Walker D.H."/>
            <person name="McBride J.W."/>
            <person name="Kyrpides N.C."/>
        </authorList>
    </citation>
    <scope>NUCLEOTIDE SEQUENCE [LARGE SCALE GENOMIC DNA]</scope>
    <source>
        <strain>Jake</strain>
    </source>
</reference>
<comment type="function">
    <text evidence="1">Catalyzes the condensation of (S)-aspartate-beta-semialdehyde [(S)-ASA] and pyruvate to 4-hydroxy-tetrahydrodipicolinate (HTPA).</text>
</comment>
<comment type="catalytic activity">
    <reaction evidence="1">
        <text>L-aspartate 4-semialdehyde + pyruvate = (2S,4S)-4-hydroxy-2,3,4,5-tetrahydrodipicolinate + H2O + H(+)</text>
        <dbReference type="Rhea" id="RHEA:34171"/>
        <dbReference type="ChEBI" id="CHEBI:15361"/>
        <dbReference type="ChEBI" id="CHEBI:15377"/>
        <dbReference type="ChEBI" id="CHEBI:15378"/>
        <dbReference type="ChEBI" id="CHEBI:67139"/>
        <dbReference type="ChEBI" id="CHEBI:537519"/>
        <dbReference type="EC" id="4.3.3.7"/>
    </reaction>
</comment>
<comment type="pathway">
    <text evidence="1">Amino-acid biosynthesis; L-lysine biosynthesis via DAP pathway; (S)-tetrahydrodipicolinate from L-aspartate: step 3/4.</text>
</comment>
<comment type="subunit">
    <text evidence="1">Homotetramer; dimer of dimers.</text>
</comment>
<comment type="subcellular location">
    <subcellularLocation>
        <location evidence="1">Cytoplasm</location>
    </subcellularLocation>
</comment>
<comment type="similarity">
    <text evidence="1">Belongs to the DapA family.</text>
</comment>
<comment type="caution">
    <text evidence="2">Was originally thought to be a dihydrodipicolinate synthase (DHDPS), catalyzing the condensation of (S)-aspartate-beta-semialdehyde [(S)-ASA] and pyruvate to dihydrodipicolinate (DHDP). However, it was shown in E.coli that the product of the enzymatic reaction is not dihydrodipicolinate but in fact (4S)-4-hydroxy-2,3,4,5-tetrahydro-(2S)-dipicolinic acid (HTPA), and that the consecutive dehydration reaction leading to DHDP is not spontaneous but catalyzed by DapB.</text>
</comment>
<sequence length="296" mass="32630">MSKVKLSGIFTALITPFKNDFSIDEDTFSKLIEHQISNNIHGLVPCGTTGEYSTLSFEEYCRVIELCVKVTNKRVPIIAGSGSNCTQETIKRTLYVQSLNVDAALVVVPYYNRPSDEGIFQHFKAVHDATDVPIIIYNIPQRTAIDPNDVLLARILSLPRIIGIKDATGDVSRPLNLKLLIDKEFALFTGNDATSLGFYAQGGGTGCISAVSNVIPKIYSDMHNAFFAHNIKEAMDANASIFKLSKVLFCQSNPSPTKYAMSLIKGISPTVRLPLVELTQENKLKVENMLKELNLI</sequence>